<protein>
    <recommendedName>
        <fullName>Ret finger protein-like 3</fullName>
    </recommendedName>
</protein>
<reference key="1">
    <citation type="journal article" date="1999" name="Genome Res.">
        <title>Duplications on human chromosome 22 reveal a novel Ret finger protein-like gene family with sense and endogenous antisense transcripts.</title>
        <authorList>
            <person name="Seroussi E."/>
            <person name="Kedra D."/>
            <person name="Pan H.-Q."/>
            <person name="Peyrad M."/>
            <person name="Schwartz C."/>
            <person name="Scambler P."/>
            <person name="Donnai D."/>
            <person name="Roe B.A."/>
            <person name="Dumanski J.P."/>
        </authorList>
    </citation>
    <scope>NUCLEOTIDE SEQUENCE [MRNA] (ISOFORM 1)</scope>
</reference>
<reference key="2">
    <citation type="journal article" date="2004" name="Genome Biol.">
        <title>A genome annotation-driven approach to cloning the human ORFeome.</title>
        <authorList>
            <person name="Collins J.E."/>
            <person name="Wright C.L."/>
            <person name="Edwards C.A."/>
            <person name="Davis M.P."/>
            <person name="Grinham J.A."/>
            <person name="Cole C.G."/>
            <person name="Goward M.E."/>
            <person name="Aguado B."/>
            <person name="Mallya M."/>
            <person name="Mokrab Y."/>
            <person name="Huckle E.J."/>
            <person name="Beare D.M."/>
            <person name="Dunham I."/>
        </authorList>
    </citation>
    <scope>NUCLEOTIDE SEQUENCE [LARGE SCALE MRNA] (ISOFORM 1)</scope>
</reference>
<reference key="3">
    <citation type="journal article" date="1999" name="Nature">
        <title>The DNA sequence of human chromosome 22.</title>
        <authorList>
            <person name="Dunham I."/>
            <person name="Hunt A.R."/>
            <person name="Collins J.E."/>
            <person name="Bruskiewich R."/>
            <person name="Beare D.M."/>
            <person name="Clamp M."/>
            <person name="Smink L.J."/>
            <person name="Ainscough R."/>
            <person name="Almeida J.P."/>
            <person name="Babbage A.K."/>
            <person name="Bagguley C."/>
            <person name="Bailey J."/>
            <person name="Barlow K.F."/>
            <person name="Bates K.N."/>
            <person name="Beasley O.P."/>
            <person name="Bird C.P."/>
            <person name="Blakey S.E."/>
            <person name="Bridgeman A.M."/>
            <person name="Buck D."/>
            <person name="Burgess J."/>
            <person name="Burrill W.D."/>
            <person name="Burton J."/>
            <person name="Carder C."/>
            <person name="Carter N.P."/>
            <person name="Chen Y."/>
            <person name="Clark G."/>
            <person name="Clegg S.M."/>
            <person name="Cobley V.E."/>
            <person name="Cole C.G."/>
            <person name="Collier R.E."/>
            <person name="Connor R."/>
            <person name="Conroy D."/>
            <person name="Corby N.R."/>
            <person name="Coville G.J."/>
            <person name="Cox A.V."/>
            <person name="Davis J."/>
            <person name="Dawson E."/>
            <person name="Dhami P.D."/>
            <person name="Dockree C."/>
            <person name="Dodsworth S.J."/>
            <person name="Durbin R.M."/>
            <person name="Ellington A.G."/>
            <person name="Evans K.L."/>
            <person name="Fey J.M."/>
            <person name="Fleming K."/>
            <person name="French L."/>
            <person name="Garner A.A."/>
            <person name="Gilbert J.G.R."/>
            <person name="Goward M.E."/>
            <person name="Grafham D.V."/>
            <person name="Griffiths M.N.D."/>
            <person name="Hall C."/>
            <person name="Hall R.E."/>
            <person name="Hall-Tamlyn G."/>
            <person name="Heathcott R.W."/>
            <person name="Ho S."/>
            <person name="Holmes S."/>
            <person name="Hunt S.E."/>
            <person name="Jones M.C."/>
            <person name="Kershaw J."/>
            <person name="Kimberley A.M."/>
            <person name="King A."/>
            <person name="Laird G.K."/>
            <person name="Langford C.F."/>
            <person name="Leversha M.A."/>
            <person name="Lloyd C."/>
            <person name="Lloyd D.M."/>
            <person name="Martyn I.D."/>
            <person name="Mashreghi-Mohammadi M."/>
            <person name="Matthews L.H."/>
            <person name="Mccann O.T."/>
            <person name="Mcclay J."/>
            <person name="Mclaren S."/>
            <person name="McMurray A.A."/>
            <person name="Milne S.A."/>
            <person name="Mortimore B.J."/>
            <person name="Odell C.N."/>
            <person name="Pavitt R."/>
            <person name="Pearce A.V."/>
            <person name="Pearson D."/>
            <person name="Phillimore B.J.C.T."/>
            <person name="Phillips S.H."/>
            <person name="Plumb R.W."/>
            <person name="Ramsay H."/>
            <person name="Ramsey Y."/>
            <person name="Rogers L."/>
            <person name="Ross M.T."/>
            <person name="Scott C.E."/>
            <person name="Sehra H.K."/>
            <person name="Skuce C.D."/>
            <person name="Smalley S."/>
            <person name="Smith M.L."/>
            <person name="Soderlund C."/>
            <person name="Spragon L."/>
            <person name="Steward C.A."/>
            <person name="Sulston J.E."/>
            <person name="Swann R.M."/>
            <person name="Vaudin M."/>
            <person name="Wall M."/>
            <person name="Wallis J.M."/>
            <person name="Whiteley M.N."/>
            <person name="Willey D.L."/>
            <person name="Williams L."/>
            <person name="Williams S.A."/>
            <person name="Williamson H."/>
            <person name="Wilmer T.E."/>
            <person name="Wilming L."/>
            <person name="Wright C.L."/>
            <person name="Hubbard T."/>
            <person name="Bentley D.R."/>
            <person name="Beck S."/>
            <person name="Rogers J."/>
            <person name="Shimizu N."/>
            <person name="Minoshima S."/>
            <person name="Kawasaki K."/>
            <person name="Sasaki T."/>
            <person name="Asakawa S."/>
            <person name="Kudoh J."/>
            <person name="Shintani A."/>
            <person name="Shibuya K."/>
            <person name="Yoshizaki Y."/>
            <person name="Aoki N."/>
            <person name="Mitsuyama S."/>
            <person name="Roe B.A."/>
            <person name="Chen F."/>
            <person name="Chu L."/>
            <person name="Crabtree J."/>
            <person name="Deschamps S."/>
            <person name="Do A."/>
            <person name="Do T."/>
            <person name="Dorman A."/>
            <person name="Fang F."/>
            <person name="Fu Y."/>
            <person name="Hu P."/>
            <person name="Hua A."/>
            <person name="Kenton S."/>
            <person name="Lai H."/>
            <person name="Lao H.I."/>
            <person name="Lewis J."/>
            <person name="Lewis S."/>
            <person name="Lin S.-P."/>
            <person name="Loh P."/>
            <person name="Malaj E."/>
            <person name="Nguyen T."/>
            <person name="Pan H."/>
            <person name="Phan S."/>
            <person name="Qi S."/>
            <person name="Qian Y."/>
            <person name="Ray L."/>
            <person name="Ren Q."/>
            <person name="Shaull S."/>
            <person name="Sloan D."/>
            <person name="Song L."/>
            <person name="Wang Q."/>
            <person name="Wang Y."/>
            <person name="Wang Z."/>
            <person name="White J."/>
            <person name="Willingham D."/>
            <person name="Wu H."/>
            <person name="Yao Z."/>
            <person name="Zhan M."/>
            <person name="Zhang G."/>
            <person name="Chissoe S."/>
            <person name="Murray J."/>
            <person name="Miller N."/>
            <person name="Minx P."/>
            <person name="Fulton R."/>
            <person name="Johnson D."/>
            <person name="Bemis G."/>
            <person name="Bentley D."/>
            <person name="Bradshaw H."/>
            <person name="Bourne S."/>
            <person name="Cordes M."/>
            <person name="Du Z."/>
            <person name="Fulton L."/>
            <person name="Goela D."/>
            <person name="Graves T."/>
            <person name="Hawkins J."/>
            <person name="Hinds K."/>
            <person name="Kemp K."/>
            <person name="Latreille P."/>
            <person name="Layman D."/>
            <person name="Ozersky P."/>
            <person name="Rohlfing T."/>
            <person name="Scheet P."/>
            <person name="Walker C."/>
            <person name="Wamsley A."/>
            <person name="Wohldmann P."/>
            <person name="Pepin K."/>
            <person name="Nelson J."/>
            <person name="Korf I."/>
            <person name="Bedell J.A."/>
            <person name="Hillier L.W."/>
            <person name="Mardis E."/>
            <person name="Waterston R."/>
            <person name="Wilson R."/>
            <person name="Emanuel B.S."/>
            <person name="Shaikh T."/>
            <person name="Kurahashi H."/>
            <person name="Saitta S."/>
            <person name="Budarf M.L."/>
            <person name="McDermid H.E."/>
            <person name="Johnson A."/>
            <person name="Wong A.C.C."/>
            <person name="Morrow B.E."/>
            <person name="Edelmann L."/>
            <person name="Kim U.J."/>
            <person name="Shizuya H."/>
            <person name="Simon M.I."/>
            <person name="Dumanski J.P."/>
            <person name="Peyrard M."/>
            <person name="Kedra D."/>
            <person name="Seroussi E."/>
            <person name="Fransson I."/>
            <person name="Tapia I."/>
            <person name="Bruder C.E."/>
            <person name="O'Brien K.P."/>
            <person name="Wilkinson P."/>
            <person name="Bodenteich A."/>
            <person name="Hartman K."/>
            <person name="Hu X."/>
            <person name="Khan A.S."/>
            <person name="Lane L."/>
            <person name="Tilahun Y."/>
            <person name="Wright H."/>
        </authorList>
    </citation>
    <scope>NUCLEOTIDE SEQUENCE [LARGE SCALE GENOMIC DNA]</scope>
</reference>
<reference key="4">
    <citation type="journal article" date="2004" name="Genome Res.">
        <title>The status, quality, and expansion of the NIH full-length cDNA project: the Mammalian Gene Collection (MGC).</title>
        <authorList>
            <consortium name="The MGC Project Team"/>
        </authorList>
    </citation>
    <scope>NUCLEOTIDE SEQUENCE [LARGE SCALE MRNA] (ISOFORMS 1 AND 2)</scope>
    <scope>VARIANT MET-110</scope>
    <source>
        <tissue>Brain</tissue>
    </source>
</reference>
<reference key="5">
    <citation type="journal article" date="2008" name="Am. J. Hum. Genet.">
        <title>Evolutionary forces shape the human RFPL1,2,3 genes toward a role in neocortex development.</title>
        <authorList>
            <person name="Bonnefont J."/>
            <person name="Nikolaev S.I."/>
            <person name="Perrier A.L."/>
            <person name="Guo S."/>
            <person name="Cartier L."/>
            <person name="Sorce S."/>
            <person name="Laforge T."/>
            <person name="Aubry L."/>
            <person name="Khaitovich P."/>
            <person name="Peschanski M."/>
            <person name="Antonarakis S.E."/>
            <person name="Krause K.H."/>
        </authorList>
    </citation>
    <scope>TISSUE SPECIFICITY</scope>
</reference>
<reference key="6">
    <citation type="journal article" date="2014" name="J. Biol. Chem.">
        <title>Identification of RFPL3 protein as a novel E3 ubiquitin ligase modulating the integration activity of human immunodeficiency virus, type 1 preintegration complex using a microtiter plate-based assay.</title>
        <authorList>
            <person name="Tan B.H."/>
            <person name="Suzuki Y."/>
            <person name="Takahashi H."/>
            <person name="Ying P.H."/>
            <person name="Takahashi C."/>
            <person name="Han Q."/>
            <person name="Chin W.X."/>
            <person name="Chao S.H."/>
            <person name="Sawasaki T."/>
            <person name="Yamamoto N."/>
            <person name="Suzuki Y."/>
        </authorList>
    </citation>
    <scope>FUNCTION (MICROBIAL INFECTION)</scope>
    <scope>SUBCELLULAR LOCATION</scope>
</reference>
<proteinExistence type="evidence at protein level"/>
<name>RFPL3_HUMAN</name>
<comment type="function">
    <text evidence="5">(Microbial infection) Stimulates the activity of Human Immunodeficiency Virus 1/HIV-1 pre-integration complex.</text>
</comment>
<comment type="interaction">
    <interactant intactId="EBI-10188956">
        <id>O75679</id>
    </interactant>
    <interactant intactId="EBI-2837036">
        <id>Q6ZUJ4</id>
        <label>C3orf62</label>
    </interactant>
    <organismsDiffer>false</organismsDiffer>
    <experiments>3</experiments>
</comment>
<comment type="interaction">
    <interactant intactId="EBI-10188956">
        <id>O75679</id>
    </interactant>
    <interactant intactId="EBI-742054">
        <id>Q96D03</id>
        <label>DDIT4L</label>
    </interactant>
    <organismsDiffer>false</organismsDiffer>
    <experiments>3</experiments>
</comment>
<comment type="interaction">
    <interactant intactId="EBI-10188956">
        <id>O75679</id>
    </interactant>
    <interactant intactId="EBI-1045377">
        <id>P47813</id>
        <label>EIF1AX</label>
    </interactant>
    <organismsDiffer>false</organismsDiffer>
    <experiments>3</experiments>
</comment>
<comment type="interaction">
    <interactant intactId="EBI-10188956">
        <id>O75679</id>
    </interactant>
    <interactant intactId="EBI-739395">
        <id>Q16082</id>
        <label>HSPB2</label>
    </interactant>
    <organismsDiffer>false</organismsDiffer>
    <experiments>4</experiments>
</comment>
<comment type="interaction">
    <interactant intactId="EBI-10188956">
        <id>O75679</id>
    </interactant>
    <interactant intactId="EBI-739832">
        <id>Q8TBB1</id>
        <label>LNX1</label>
    </interactant>
    <organismsDiffer>false</organismsDiffer>
    <experiments>3</experiments>
</comment>
<comment type="interaction">
    <interactant intactId="EBI-10188956">
        <id>O75679</id>
    </interactant>
    <interactant intactId="EBI-357021">
        <id>Q9NQP4</id>
        <label>PFDN4</label>
    </interactant>
    <organismsDiffer>false</organismsDiffer>
    <experiments>3</experiments>
</comment>
<comment type="interaction">
    <interactant intactId="EBI-10188956">
        <id>O75679</id>
    </interactant>
    <interactant intactId="EBI-11986735">
        <id>Q8WVV4-1</id>
        <label>POF1B</label>
    </interactant>
    <organismsDiffer>false</organismsDiffer>
    <experiments>3</experiments>
</comment>
<comment type="interaction">
    <interactant intactId="EBI-10188956">
        <id>O75679</id>
    </interactant>
    <interactant intactId="EBI-2823702">
        <id>Q92546</id>
        <label>RGP1</label>
    </interactant>
    <organismsDiffer>false</organismsDiffer>
    <experiments>3</experiments>
</comment>
<comment type="interaction">
    <interactant intactId="EBI-10188956">
        <id>O75679</id>
    </interactant>
    <interactant intactId="EBI-10269374">
        <id>Q8ND83</id>
        <label>SLAIN1</label>
    </interactant>
    <organismsDiffer>false</organismsDiffer>
    <experiments>5</experiments>
</comment>
<comment type="interaction">
    <interactant intactId="EBI-10188956">
        <id>O75679</id>
    </interactant>
    <interactant intactId="EBI-10180829">
        <id>Q7KZS0</id>
        <label>UBE2I</label>
    </interactant>
    <organismsDiffer>false</organismsDiffer>
    <experiments>3</experiments>
</comment>
<comment type="subcellular location">
    <subcellularLocation>
        <location evidence="5">Cytoplasm</location>
    </subcellularLocation>
    <subcellularLocation>
        <location evidence="5">Nucleus</location>
    </subcellularLocation>
    <text evidence="5">A higher concentration of RFPL3 is observed in the cytoplasm compared to the nucleus.</text>
</comment>
<comment type="alternative products">
    <event type="alternative splicing"/>
    <isoform>
        <id>O75679-1</id>
        <name>1</name>
        <sequence type="displayed"/>
    </isoform>
    <isoform>
        <id>O75679-2</id>
        <name>2</name>
        <sequence type="described" ref="VSP_045651"/>
    </isoform>
</comment>
<comment type="tissue specificity">
    <text evidence="4">Expressed during neurogenesis in differentiating human embryonic stem cells and in the developing human neocortex.</text>
</comment>
<comment type="sequence caution" evidence="7">
    <conflict type="erroneous initiation">
        <sequence resource="EMBL-CDS" id="CAA09046"/>
    </conflict>
</comment>
<feature type="chain" id="PRO_0000056032" description="Ret finger protein-like 3">
    <location>
        <begin position="1"/>
        <end position="317"/>
    </location>
</feature>
<feature type="domain" description="B30.2/SPRY" evidence="2">
    <location>
        <begin position="107"/>
        <end position="301"/>
    </location>
</feature>
<feature type="zinc finger region" description="RING-type" evidence="1">
    <location>
        <begin position="40"/>
        <end position="82"/>
    </location>
</feature>
<feature type="splice variant" id="VSP_045651" description="In isoform 2." evidence="6">
    <location>
        <begin position="1"/>
        <end position="29"/>
    </location>
</feature>
<feature type="sequence variant" id="VAR_052091" description="In dbSNP:rs16987625.">
    <original>M</original>
    <variation>T</variation>
    <location>
        <position position="83"/>
    </location>
</feature>
<feature type="sequence variant" id="VAR_052092" description="In dbSNP:rs9621427." evidence="3">
    <original>L</original>
    <variation>M</variation>
    <location>
        <position position="110"/>
    </location>
</feature>
<feature type="sequence variant" id="VAR_052093" description="In dbSNP:rs9619258.">
    <original>D</original>
    <variation>N</variation>
    <location>
        <position position="126"/>
    </location>
</feature>
<feature type="sequence variant" id="VAR_059814" description="In dbSNP:rs5749408.">
    <original>Y</original>
    <variation>C</variation>
    <location>
        <position position="181"/>
    </location>
</feature>
<sequence length="317" mass="35386">MKRLSLVTTNRLSPQGNFLPLCTFPLAVDMAALFQEASSCPVCSDYLEKPMSLECGCTVCLKCINSLQKEPHGEDLLCCCCSMVSQRNKIRPNRQLERLVSHIKELEPKLKKILQMNPRMRKFQVDMTLDADTANNFLLISDDLRSVRSGLITQNRQDLAERFDVSVCILGSPRFTCGRHYWEVDVGTSTEWDLGVCRESVHCKGKIQLTTELGFWTVSLRDGSRLSASTVPLTFLLVDRKLQRVGIFLDMGMQNVSFFDAESGSHVYTFRSVSAEEPLRPFLAPSIPPNGDQGVLSICPLMNSGTTDAPVRPGEAK</sequence>
<keyword id="KW-0025">Alternative splicing</keyword>
<keyword id="KW-0963">Cytoplasm</keyword>
<keyword id="KW-0945">Host-virus interaction</keyword>
<keyword id="KW-0479">Metal-binding</keyword>
<keyword id="KW-0539">Nucleus</keyword>
<keyword id="KW-1185">Reference proteome</keyword>
<keyword id="KW-0862">Zinc</keyword>
<keyword id="KW-0863">Zinc-finger</keyword>
<accession>O75679</accession>
<accession>A2A279</accession>
<accession>Q6IC03</accession>
<accession>Q6IC04</accession>
<accession>Q6NSX3</accession>
<accession>Q8N5R4</accession>
<dbReference type="EMBL" id="AJ010232">
    <property type="protein sequence ID" value="CAA09046.1"/>
    <property type="status" value="ALT_INIT"/>
    <property type="molecule type" value="mRNA"/>
</dbReference>
<dbReference type="EMBL" id="CR456564">
    <property type="protein sequence ID" value="CAG30450.1"/>
    <property type="molecule type" value="mRNA"/>
</dbReference>
<dbReference type="EMBL" id="AL021937">
    <property type="status" value="NOT_ANNOTATED_CDS"/>
    <property type="molecule type" value="Genomic_DNA"/>
</dbReference>
<dbReference type="EMBL" id="BC031689">
    <property type="protein sequence ID" value="AAH31689.1"/>
    <property type="molecule type" value="mRNA"/>
</dbReference>
<dbReference type="EMBL" id="BC069753">
    <property type="protein sequence ID" value="AAH69753.2"/>
    <property type="molecule type" value="mRNA"/>
</dbReference>
<dbReference type="CCDS" id="CCDS13904.1">
    <molecule id="O75679-2"/>
</dbReference>
<dbReference type="CCDS" id="CCDS43011.1">
    <molecule id="O75679-1"/>
</dbReference>
<dbReference type="RefSeq" id="NP_001092005.1">
    <molecule id="O75679-1"/>
    <property type="nucleotide sequence ID" value="NM_001098535.1"/>
</dbReference>
<dbReference type="RefSeq" id="NP_006595.1">
    <molecule id="O75679-2"/>
    <property type="nucleotide sequence ID" value="NM_006604.2"/>
</dbReference>
<dbReference type="SMR" id="O75679"/>
<dbReference type="BioGRID" id="115961">
    <property type="interactions" value="19"/>
</dbReference>
<dbReference type="FunCoup" id="O75679">
    <property type="interactions" value="56"/>
</dbReference>
<dbReference type="IntAct" id="O75679">
    <property type="interactions" value="15"/>
</dbReference>
<dbReference type="STRING" id="9606.ENSP00000249007"/>
<dbReference type="iPTMnet" id="O75679"/>
<dbReference type="PhosphoSitePlus" id="O75679"/>
<dbReference type="BioMuta" id="RFPL3"/>
<dbReference type="MassIVE" id="O75679"/>
<dbReference type="PaxDb" id="9606-ENSP00000249007"/>
<dbReference type="PeptideAtlas" id="O75679"/>
<dbReference type="Antibodypedia" id="11237">
    <property type="antibodies" value="183 antibodies from 22 providers"/>
</dbReference>
<dbReference type="DNASU" id="10738"/>
<dbReference type="Ensembl" id="ENST00000249007.4">
    <molecule id="O75679-1"/>
    <property type="protein sequence ID" value="ENSP00000249007.4"/>
    <property type="gene ID" value="ENSG00000128276.10"/>
</dbReference>
<dbReference type="Ensembl" id="ENST00000397468.5">
    <molecule id="O75679-2"/>
    <property type="protein sequence ID" value="ENSP00000380609.1"/>
    <property type="gene ID" value="ENSG00000128276.10"/>
</dbReference>
<dbReference type="GeneID" id="10738"/>
<dbReference type="KEGG" id="hsa:10738"/>
<dbReference type="MANE-Select" id="ENST00000249007.4">
    <property type="protein sequence ID" value="ENSP00000249007.4"/>
    <property type="RefSeq nucleotide sequence ID" value="NM_001098535.1"/>
    <property type="RefSeq protein sequence ID" value="NP_001092005.1"/>
</dbReference>
<dbReference type="UCSC" id="uc003amj.3">
    <molecule id="O75679-1"/>
    <property type="organism name" value="human"/>
</dbReference>
<dbReference type="AGR" id="HGNC:9980"/>
<dbReference type="CTD" id="10738"/>
<dbReference type="DisGeNET" id="10738"/>
<dbReference type="GeneCards" id="RFPL3"/>
<dbReference type="HGNC" id="HGNC:9980">
    <property type="gene designation" value="RFPL3"/>
</dbReference>
<dbReference type="HPA" id="ENSG00000128276">
    <property type="expression patterns" value="Tissue enriched (testis)"/>
</dbReference>
<dbReference type="MIM" id="605970">
    <property type="type" value="gene"/>
</dbReference>
<dbReference type="neXtProt" id="NX_O75679"/>
<dbReference type="OpenTargets" id="ENSG00000128276"/>
<dbReference type="PharmGKB" id="PA34349"/>
<dbReference type="VEuPathDB" id="HostDB:ENSG00000128276"/>
<dbReference type="eggNOG" id="KOG2177">
    <property type="taxonomic scope" value="Eukaryota"/>
</dbReference>
<dbReference type="GeneTree" id="ENSGT00940000163408"/>
<dbReference type="HOGENOM" id="CLU_013137_7_1_1"/>
<dbReference type="InParanoid" id="O75679"/>
<dbReference type="OMA" id="RSGCIRH"/>
<dbReference type="OrthoDB" id="128536at2759"/>
<dbReference type="PAN-GO" id="O75679">
    <property type="GO annotations" value="4 GO annotations based on evolutionary models"/>
</dbReference>
<dbReference type="PhylomeDB" id="O75679"/>
<dbReference type="TreeFam" id="TF317532"/>
<dbReference type="PathwayCommons" id="O75679"/>
<dbReference type="SignaLink" id="O75679"/>
<dbReference type="SIGNOR" id="O75679"/>
<dbReference type="BioGRID-ORCS" id="10738">
    <property type="hits" value="7 hits in 1090 CRISPR screens"/>
</dbReference>
<dbReference type="GenomeRNAi" id="10738"/>
<dbReference type="Pharos" id="O75679">
    <property type="development level" value="Tbio"/>
</dbReference>
<dbReference type="PRO" id="PR:O75679"/>
<dbReference type="Proteomes" id="UP000005640">
    <property type="component" value="Chromosome 22"/>
</dbReference>
<dbReference type="RNAct" id="O75679">
    <property type="molecule type" value="protein"/>
</dbReference>
<dbReference type="Bgee" id="ENSG00000128276">
    <property type="expression patterns" value="Expressed in male germ line stem cell (sensu Vertebrata) in testis and 61 other cell types or tissues"/>
</dbReference>
<dbReference type="GO" id="GO:0005737">
    <property type="term" value="C:cytoplasm"/>
    <property type="evidence" value="ECO:0000318"/>
    <property type="project" value="GO_Central"/>
</dbReference>
<dbReference type="GO" id="GO:0005634">
    <property type="term" value="C:nucleus"/>
    <property type="evidence" value="ECO:0007669"/>
    <property type="project" value="UniProtKB-SubCell"/>
</dbReference>
<dbReference type="GO" id="GO:0061630">
    <property type="term" value="F:ubiquitin protein ligase activity"/>
    <property type="evidence" value="ECO:0000318"/>
    <property type="project" value="GO_Central"/>
</dbReference>
<dbReference type="GO" id="GO:0008270">
    <property type="term" value="F:zinc ion binding"/>
    <property type="evidence" value="ECO:0007669"/>
    <property type="project" value="UniProtKB-KW"/>
</dbReference>
<dbReference type="GO" id="GO:0045087">
    <property type="term" value="P:innate immune response"/>
    <property type="evidence" value="ECO:0000318"/>
    <property type="project" value="GO_Central"/>
</dbReference>
<dbReference type="GO" id="GO:0010468">
    <property type="term" value="P:regulation of gene expression"/>
    <property type="evidence" value="ECO:0000318"/>
    <property type="project" value="GO_Central"/>
</dbReference>
<dbReference type="CDD" id="cd15821">
    <property type="entry name" value="SPRY_PRY_RFPL"/>
    <property type="match status" value="1"/>
</dbReference>
<dbReference type="CDD" id="cd16621">
    <property type="entry name" value="vRING-HC-C4C4_RFPL"/>
    <property type="match status" value="1"/>
</dbReference>
<dbReference type="FunFam" id="2.60.120.920:FF:000040">
    <property type="entry name" value="Ret finger protein-like 4A"/>
    <property type="match status" value="1"/>
</dbReference>
<dbReference type="Gene3D" id="2.60.120.920">
    <property type="match status" value="1"/>
</dbReference>
<dbReference type="Gene3D" id="3.30.40.10">
    <property type="entry name" value="Zinc/RING finger domain, C3HC4 (zinc finger)"/>
    <property type="match status" value="1"/>
</dbReference>
<dbReference type="InterPro" id="IPR001870">
    <property type="entry name" value="B30.2/SPRY"/>
</dbReference>
<dbReference type="InterPro" id="IPR043136">
    <property type="entry name" value="B30.2/SPRY_sf"/>
</dbReference>
<dbReference type="InterPro" id="IPR003879">
    <property type="entry name" value="Butyrophylin_SPRY"/>
</dbReference>
<dbReference type="InterPro" id="IPR013320">
    <property type="entry name" value="ConA-like_dom_sf"/>
</dbReference>
<dbReference type="InterPro" id="IPR006574">
    <property type="entry name" value="PRY"/>
</dbReference>
<dbReference type="InterPro" id="IPR022723">
    <property type="entry name" value="RDM_domain_RFPL"/>
</dbReference>
<dbReference type="InterPro" id="IPR037960">
    <property type="entry name" value="SPRY/PRY_RFPL"/>
</dbReference>
<dbReference type="InterPro" id="IPR003877">
    <property type="entry name" value="SPRY_dom"/>
</dbReference>
<dbReference type="InterPro" id="IPR050143">
    <property type="entry name" value="TRIM/RBCC"/>
</dbReference>
<dbReference type="InterPro" id="IPR001841">
    <property type="entry name" value="Znf_RING"/>
</dbReference>
<dbReference type="InterPro" id="IPR013083">
    <property type="entry name" value="Znf_RING/FYVE/PHD"/>
</dbReference>
<dbReference type="PANTHER" id="PTHR24103">
    <property type="entry name" value="E3 UBIQUITIN-PROTEIN LIGASE TRIM"/>
    <property type="match status" value="1"/>
</dbReference>
<dbReference type="Pfam" id="PF13765">
    <property type="entry name" value="PRY"/>
    <property type="match status" value="1"/>
</dbReference>
<dbReference type="Pfam" id="PF11002">
    <property type="entry name" value="RDM"/>
    <property type="match status" value="1"/>
</dbReference>
<dbReference type="Pfam" id="PF00622">
    <property type="entry name" value="SPRY"/>
    <property type="match status" value="1"/>
</dbReference>
<dbReference type="Pfam" id="PF15227">
    <property type="entry name" value="zf-C3HC4_4"/>
    <property type="match status" value="1"/>
</dbReference>
<dbReference type="PRINTS" id="PR01407">
    <property type="entry name" value="BUTYPHLNCDUF"/>
</dbReference>
<dbReference type="SMART" id="SM00589">
    <property type="entry name" value="PRY"/>
    <property type="match status" value="1"/>
</dbReference>
<dbReference type="SMART" id="SM00449">
    <property type="entry name" value="SPRY"/>
    <property type="match status" value="1"/>
</dbReference>
<dbReference type="SUPFAM" id="SSF49899">
    <property type="entry name" value="Concanavalin A-like lectins/glucanases"/>
    <property type="match status" value="1"/>
</dbReference>
<dbReference type="SUPFAM" id="SSF57850">
    <property type="entry name" value="RING/U-box"/>
    <property type="match status" value="1"/>
</dbReference>
<dbReference type="PROSITE" id="PS50188">
    <property type="entry name" value="B302_SPRY"/>
    <property type="match status" value="1"/>
</dbReference>
<dbReference type="PROSITE" id="PS50089">
    <property type="entry name" value="ZF_RING_2"/>
    <property type="match status" value="1"/>
</dbReference>
<evidence type="ECO:0000255" key="1">
    <source>
        <dbReference type="PROSITE-ProRule" id="PRU00175"/>
    </source>
</evidence>
<evidence type="ECO:0000255" key="2">
    <source>
        <dbReference type="PROSITE-ProRule" id="PRU00548"/>
    </source>
</evidence>
<evidence type="ECO:0000269" key="3">
    <source>
    </source>
</evidence>
<evidence type="ECO:0000269" key="4">
    <source>
    </source>
</evidence>
<evidence type="ECO:0000269" key="5">
    <source>
    </source>
</evidence>
<evidence type="ECO:0000303" key="6">
    <source>
    </source>
</evidence>
<evidence type="ECO:0000305" key="7"/>
<gene>
    <name type="primary">RFPL3</name>
</gene>
<organism>
    <name type="scientific">Homo sapiens</name>
    <name type="common">Human</name>
    <dbReference type="NCBI Taxonomy" id="9606"/>
    <lineage>
        <taxon>Eukaryota</taxon>
        <taxon>Metazoa</taxon>
        <taxon>Chordata</taxon>
        <taxon>Craniata</taxon>
        <taxon>Vertebrata</taxon>
        <taxon>Euteleostomi</taxon>
        <taxon>Mammalia</taxon>
        <taxon>Eutheria</taxon>
        <taxon>Euarchontoglires</taxon>
        <taxon>Primates</taxon>
        <taxon>Haplorrhini</taxon>
        <taxon>Catarrhini</taxon>
        <taxon>Hominidae</taxon>
        <taxon>Homo</taxon>
    </lineage>
</organism>